<accession>P24162</accession>
<accession>D5AR57</accession>
<sequence length="257" mass="27362">MSYHTIRYEISEGLAVITLDRPEVMNALNAAMRHELTAALHRARGEARAIVLTGSGRAFCSGQDLGDGAAEGLNLETVLREEYEPLLQAIYSCPLPVLAAVNGAAAGAGANLALAADVVIAAQSAAFMQAFTRIGLMPDAGGTWWLPRQVGMARAMGMALFAEKIGAEEAARMGLIWEAVPDVDFEHHWRARAAHLARGPSAAFAAVKKAFHAGLSNPLPAQLALEARLQGELGQSADFREGVQAFLEKRPPHFTGR</sequence>
<name>ECHH_RHOCB</name>
<dbReference type="EC" id="4.2.1.17"/>
<dbReference type="EMBL" id="X60194">
    <property type="protein sequence ID" value="CAA42750.1"/>
    <property type="molecule type" value="Genomic_DNA"/>
</dbReference>
<dbReference type="EMBL" id="CP001312">
    <property type="protein sequence ID" value="ADE86862.1"/>
    <property type="molecule type" value="Genomic_DNA"/>
</dbReference>
<dbReference type="PIR" id="S19026">
    <property type="entry name" value="S19026"/>
</dbReference>
<dbReference type="RefSeq" id="WP_013068835.1">
    <property type="nucleotide sequence ID" value="NC_014034.1"/>
</dbReference>
<dbReference type="SMR" id="P24162"/>
<dbReference type="STRING" id="272942.RCAP_rcc03138"/>
<dbReference type="GeneID" id="31491925"/>
<dbReference type="KEGG" id="rcp:RCAP_rcc03138"/>
<dbReference type="eggNOG" id="COG1024">
    <property type="taxonomic scope" value="Bacteria"/>
</dbReference>
<dbReference type="HOGENOM" id="CLU_009834_7_2_5"/>
<dbReference type="OrthoDB" id="5730382at2"/>
<dbReference type="Proteomes" id="UP000002361">
    <property type="component" value="Chromosome"/>
</dbReference>
<dbReference type="GO" id="GO:0004300">
    <property type="term" value="F:enoyl-CoA hydratase activity"/>
    <property type="evidence" value="ECO:0007669"/>
    <property type="project" value="UniProtKB-EC"/>
</dbReference>
<dbReference type="GO" id="GO:0006631">
    <property type="term" value="P:fatty acid metabolic process"/>
    <property type="evidence" value="ECO:0007669"/>
    <property type="project" value="UniProtKB-KW"/>
</dbReference>
<dbReference type="CDD" id="cd06558">
    <property type="entry name" value="crotonase-like"/>
    <property type="match status" value="1"/>
</dbReference>
<dbReference type="Gene3D" id="3.90.226.10">
    <property type="entry name" value="2-enoyl-CoA Hydratase, Chain A, domain 1"/>
    <property type="match status" value="1"/>
</dbReference>
<dbReference type="Gene3D" id="1.10.12.10">
    <property type="entry name" value="Lyase 2-enoyl-coa Hydratase, Chain A, domain 2"/>
    <property type="match status" value="1"/>
</dbReference>
<dbReference type="InterPro" id="IPR029045">
    <property type="entry name" value="ClpP/crotonase-like_dom_sf"/>
</dbReference>
<dbReference type="InterPro" id="IPR018376">
    <property type="entry name" value="Enoyl-CoA_hyd/isom_CS"/>
</dbReference>
<dbReference type="InterPro" id="IPR001753">
    <property type="entry name" value="Enoyl-CoA_hydra/iso"/>
</dbReference>
<dbReference type="InterPro" id="IPR014748">
    <property type="entry name" value="Enoyl-CoA_hydra_C"/>
</dbReference>
<dbReference type="PANTHER" id="PTHR43459:SF1">
    <property type="entry name" value="EG:BACN32G11.4 PROTEIN"/>
    <property type="match status" value="1"/>
</dbReference>
<dbReference type="PANTHER" id="PTHR43459">
    <property type="entry name" value="ENOYL-COA HYDRATASE"/>
    <property type="match status" value="1"/>
</dbReference>
<dbReference type="Pfam" id="PF00378">
    <property type="entry name" value="ECH_1"/>
    <property type="match status" value="1"/>
</dbReference>
<dbReference type="SUPFAM" id="SSF52096">
    <property type="entry name" value="ClpP/crotonase"/>
    <property type="match status" value="1"/>
</dbReference>
<dbReference type="PROSITE" id="PS00166">
    <property type="entry name" value="ENOYL_COA_HYDRATASE"/>
    <property type="match status" value="1"/>
</dbReference>
<proteinExistence type="inferred from homology"/>
<organism>
    <name type="scientific">Rhodobacter capsulatus (strain ATCC BAA-309 / NBRC 16581 / SB1003)</name>
    <dbReference type="NCBI Taxonomy" id="272942"/>
    <lineage>
        <taxon>Bacteria</taxon>
        <taxon>Pseudomonadati</taxon>
        <taxon>Pseudomonadota</taxon>
        <taxon>Alphaproteobacteria</taxon>
        <taxon>Rhodobacterales</taxon>
        <taxon>Rhodobacter group</taxon>
        <taxon>Rhodobacter</taxon>
    </lineage>
</organism>
<comment type="function">
    <text>Could possibly oxidize fatty acids using specific components.</text>
</comment>
<comment type="catalytic activity">
    <reaction>
        <text>a (3S)-3-hydroxyacyl-CoA = a (2E)-enoyl-CoA + H2O</text>
        <dbReference type="Rhea" id="RHEA:16105"/>
        <dbReference type="ChEBI" id="CHEBI:15377"/>
        <dbReference type="ChEBI" id="CHEBI:57318"/>
        <dbReference type="ChEBI" id="CHEBI:58856"/>
        <dbReference type="EC" id="4.2.1.17"/>
    </reaction>
</comment>
<comment type="catalytic activity">
    <reaction>
        <text>a 4-saturated-(3S)-3-hydroxyacyl-CoA = a (3E)-enoyl-CoA + H2O</text>
        <dbReference type="Rhea" id="RHEA:20724"/>
        <dbReference type="ChEBI" id="CHEBI:15377"/>
        <dbReference type="ChEBI" id="CHEBI:58521"/>
        <dbReference type="ChEBI" id="CHEBI:137480"/>
        <dbReference type="EC" id="4.2.1.17"/>
    </reaction>
</comment>
<comment type="similarity">
    <text evidence="1">Belongs to the enoyl-CoA hydratase/isomerase family.</text>
</comment>
<keyword id="KW-0276">Fatty acid metabolism</keyword>
<keyword id="KW-0443">Lipid metabolism</keyword>
<keyword id="KW-0456">Lyase</keyword>
<keyword id="KW-1185">Reference proteome</keyword>
<reference key="1">
    <citation type="journal article" date="1991" name="Gene">
        <title>A bacterial homolog to the mitochondrial enoyl-CoA hydratase.</title>
        <authorList>
            <person name="Beckman D.L."/>
            <person name="Kranz R.G."/>
        </authorList>
    </citation>
    <scope>NUCLEOTIDE SEQUENCE [GENOMIC DNA]</scope>
    <source>
        <strain>ATCC BAA-309 / NBRC 16581 / SB1003</strain>
    </source>
</reference>
<reference key="2">
    <citation type="journal article" date="2010" name="J. Bacteriol.">
        <title>Complete genome sequence of the photosynthetic purple nonsulfur bacterium Rhodobacter capsulatus SB 1003.</title>
        <authorList>
            <person name="Strnad H."/>
            <person name="Lapidus A."/>
            <person name="Paces J."/>
            <person name="Ulbrich P."/>
            <person name="Vlcek C."/>
            <person name="Paces V."/>
            <person name="Haselkorn R."/>
        </authorList>
    </citation>
    <scope>NUCLEOTIDE SEQUENCE [LARGE SCALE GENOMIC DNA]</scope>
    <source>
        <strain>ATCC BAA-309 / NBRC 16581 / SB1003</strain>
    </source>
</reference>
<evidence type="ECO:0000305" key="1"/>
<gene>
    <name type="primary">fadB1</name>
    <name type="synonym">paaG</name>
    <name type="ordered locus">RCAP_rcc03138</name>
</gene>
<feature type="chain" id="PRO_0000109345" description="Probable enoyl-CoA hydratase">
    <location>
        <begin position="1"/>
        <end position="257"/>
    </location>
</feature>
<protein>
    <recommendedName>
        <fullName>Probable enoyl-CoA hydratase</fullName>
        <ecNumber>4.2.1.17</ecNumber>
    </recommendedName>
</protein>